<accession>B0T3B9</accession>
<organism>
    <name type="scientific">Caulobacter sp. (strain K31)</name>
    <dbReference type="NCBI Taxonomy" id="366602"/>
    <lineage>
        <taxon>Bacteria</taxon>
        <taxon>Pseudomonadati</taxon>
        <taxon>Pseudomonadota</taxon>
        <taxon>Alphaproteobacteria</taxon>
        <taxon>Caulobacterales</taxon>
        <taxon>Caulobacteraceae</taxon>
        <taxon>Caulobacter</taxon>
    </lineage>
</organism>
<evidence type="ECO:0000255" key="1">
    <source>
        <dbReference type="HAMAP-Rule" id="MF_00402"/>
    </source>
</evidence>
<evidence type="ECO:0000305" key="2"/>
<gene>
    <name evidence="1" type="primary">rplS</name>
    <name type="ordered locus">Caul_0217</name>
</gene>
<dbReference type="EMBL" id="CP000927">
    <property type="protein sequence ID" value="ABZ69354.1"/>
    <property type="molecule type" value="Genomic_DNA"/>
</dbReference>
<dbReference type="SMR" id="B0T3B9"/>
<dbReference type="STRING" id="366602.Caul_0217"/>
<dbReference type="KEGG" id="cak:Caul_0217"/>
<dbReference type="eggNOG" id="COG0335">
    <property type="taxonomic scope" value="Bacteria"/>
</dbReference>
<dbReference type="HOGENOM" id="CLU_103507_0_2_5"/>
<dbReference type="OrthoDB" id="9803541at2"/>
<dbReference type="GO" id="GO:0022625">
    <property type="term" value="C:cytosolic large ribosomal subunit"/>
    <property type="evidence" value="ECO:0007669"/>
    <property type="project" value="TreeGrafter"/>
</dbReference>
<dbReference type="GO" id="GO:0003735">
    <property type="term" value="F:structural constituent of ribosome"/>
    <property type="evidence" value="ECO:0007669"/>
    <property type="project" value="InterPro"/>
</dbReference>
<dbReference type="GO" id="GO:0006412">
    <property type="term" value="P:translation"/>
    <property type="evidence" value="ECO:0007669"/>
    <property type="project" value="UniProtKB-UniRule"/>
</dbReference>
<dbReference type="FunFam" id="2.30.30.790:FF:000001">
    <property type="entry name" value="50S ribosomal protein L19"/>
    <property type="match status" value="1"/>
</dbReference>
<dbReference type="Gene3D" id="2.30.30.790">
    <property type="match status" value="1"/>
</dbReference>
<dbReference type="HAMAP" id="MF_00402">
    <property type="entry name" value="Ribosomal_bL19"/>
    <property type="match status" value="1"/>
</dbReference>
<dbReference type="InterPro" id="IPR001857">
    <property type="entry name" value="Ribosomal_bL19"/>
</dbReference>
<dbReference type="InterPro" id="IPR018257">
    <property type="entry name" value="Ribosomal_bL19_CS"/>
</dbReference>
<dbReference type="InterPro" id="IPR038657">
    <property type="entry name" value="Ribosomal_bL19_sf"/>
</dbReference>
<dbReference type="InterPro" id="IPR008991">
    <property type="entry name" value="Translation_prot_SH3-like_sf"/>
</dbReference>
<dbReference type="NCBIfam" id="TIGR01024">
    <property type="entry name" value="rplS_bact"/>
    <property type="match status" value="1"/>
</dbReference>
<dbReference type="PANTHER" id="PTHR15680:SF9">
    <property type="entry name" value="LARGE RIBOSOMAL SUBUNIT PROTEIN BL19M"/>
    <property type="match status" value="1"/>
</dbReference>
<dbReference type="PANTHER" id="PTHR15680">
    <property type="entry name" value="RIBOSOMAL PROTEIN L19"/>
    <property type="match status" value="1"/>
</dbReference>
<dbReference type="Pfam" id="PF01245">
    <property type="entry name" value="Ribosomal_L19"/>
    <property type="match status" value="1"/>
</dbReference>
<dbReference type="PIRSF" id="PIRSF002191">
    <property type="entry name" value="Ribosomal_L19"/>
    <property type="match status" value="1"/>
</dbReference>
<dbReference type="PRINTS" id="PR00061">
    <property type="entry name" value="RIBOSOMALL19"/>
</dbReference>
<dbReference type="SUPFAM" id="SSF50104">
    <property type="entry name" value="Translation proteins SH3-like domain"/>
    <property type="match status" value="1"/>
</dbReference>
<dbReference type="PROSITE" id="PS01015">
    <property type="entry name" value="RIBOSOMAL_L19"/>
    <property type="match status" value="1"/>
</dbReference>
<name>RL19_CAUSK</name>
<comment type="function">
    <text evidence="1">This protein is located at the 30S-50S ribosomal subunit interface and may play a role in the structure and function of the aminoacyl-tRNA binding site.</text>
</comment>
<comment type="similarity">
    <text evidence="1">Belongs to the bacterial ribosomal protein bL19 family.</text>
</comment>
<sequence length="131" mass="14864">MAANIIKELEREEAQRLLAARAIPEFEPGDTLRVNVRIKEGERERVQAYEGVCIARSGGGVHESFTVRKISFGEGVERLFPLLSPSIESIEVKRRGVVRRAKLYYLRDRRGKSARIAERSNVRKVEVADAE</sequence>
<reference key="1">
    <citation type="submission" date="2008-01" db="EMBL/GenBank/DDBJ databases">
        <title>Complete sequence of chromosome of Caulobacter sp. K31.</title>
        <authorList>
            <consortium name="US DOE Joint Genome Institute"/>
            <person name="Copeland A."/>
            <person name="Lucas S."/>
            <person name="Lapidus A."/>
            <person name="Barry K."/>
            <person name="Glavina del Rio T."/>
            <person name="Dalin E."/>
            <person name="Tice H."/>
            <person name="Pitluck S."/>
            <person name="Bruce D."/>
            <person name="Goodwin L."/>
            <person name="Thompson L.S."/>
            <person name="Brettin T."/>
            <person name="Detter J.C."/>
            <person name="Han C."/>
            <person name="Schmutz J."/>
            <person name="Larimer F."/>
            <person name="Land M."/>
            <person name="Hauser L."/>
            <person name="Kyrpides N."/>
            <person name="Kim E."/>
            <person name="Stephens C."/>
            <person name="Richardson P."/>
        </authorList>
    </citation>
    <scope>NUCLEOTIDE SEQUENCE [LARGE SCALE GENOMIC DNA]</scope>
    <source>
        <strain>K31</strain>
    </source>
</reference>
<keyword id="KW-0687">Ribonucleoprotein</keyword>
<keyword id="KW-0689">Ribosomal protein</keyword>
<protein>
    <recommendedName>
        <fullName evidence="1">Large ribosomal subunit protein bL19</fullName>
    </recommendedName>
    <alternativeName>
        <fullName evidence="2">50S ribosomal protein L19</fullName>
    </alternativeName>
</protein>
<feature type="chain" id="PRO_1000080340" description="Large ribosomal subunit protein bL19">
    <location>
        <begin position="1"/>
        <end position="131"/>
    </location>
</feature>
<proteinExistence type="inferred from homology"/>